<organism>
    <name type="scientific">Caldicellulosiruptor saccharolyticus (strain ATCC 43494 / DSM 8903 / Tp8T 6331)</name>
    <dbReference type="NCBI Taxonomy" id="351627"/>
    <lineage>
        <taxon>Bacteria</taxon>
        <taxon>Bacillati</taxon>
        <taxon>Bacillota</taxon>
        <taxon>Bacillota incertae sedis</taxon>
        <taxon>Caldicellulosiruptorales</taxon>
        <taxon>Caldicellulosiruptoraceae</taxon>
        <taxon>Caldicellulosiruptor</taxon>
    </lineage>
</organism>
<name>SSRP_CALS8</name>
<comment type="function">
    <text evidence="1">Required for rescue of stalled ribosomes mediated by trans-translation. Binds to transfer-messenger RNA (tmRNA), required for stable association of tmRNA with ribosomes. tmRNA and SmpB together mimic tRNA shape, replacing the anticodon stem-loop with SmpB. tmRNA is encoded by the ssrA gene; the 2 termini fold to resemble tRNA(Ala) and it encodes a 'tag peptide', a short internal open reading frame. During trans-translation Ala-aminoacylated tmRNA acts like a tRNA, entering the A-site of stalled ribosomes, displacing the stalled mRNA. The ribosome then switches to translate the ORF on the tmRNA; the nascent peptide is terminated with the 'tag peptide' encoded by the tmRNA and targeted for degradation. The ribosome is freed to recommence translation, which seems to be the essential function of trans-translation.</text>
</comment>
<comment type="subcellular location">
    <subcellularLocation>
        <location evidence="1">Cytoplasm</location>
    </subcellularLocation>
    <text evidence="1">The tmRNA-SmpB complex associates with stalled 70S ribosomes.</text>
</comment>
<comment type="similarity">
    <text evidence="1">Belongs to the SmpB family.</text>
</comment>
<sequence>MAEKNKQDDIKVIATNRKAYHDYFIEETIEAGIELKGTEVKSVRLGHVNLKDSFARVENGEVFLYNMHISPYEKGNIFNVDPMRDRKLLLHKSEINRLAGYVQQKGYTLIPLKIYLKRGKIKVELAVAKGKKLFDKREAIAKRDAELEIRKKMKEYLR</sequence>
<reference key="1">
    <citation type="submission" date="2007-04" db="EMBL/GenBank/DDBJ databases">
        <title>Genome sequence of the thermophilic hydrogen-producing bacterium Caldicellulosiruptor saccharolyticus DSM 8903.</title>
        <authorList>
            <person name="Copeland A."/>
            <person name="Lucas S."/>
            <person name="Lapidus A."/>
            <person name="Barry K."/>
            <person name="Detter J.C."/>
            <person name="Glavina del Rio T."/>
            <person name="Hammon N."/>
            <person name="Israni S."/>
            <person name="Dalin E."/>
            <person name="Tice H."/>
            <person name="Pitluck S."/>
            <person name="Kiss H."/>
            <person name="Brettin T."/>
            <person name="Bruce D."/>
            <person name="Han C."/>
            <person name="Schmutz J."/>
            <person name="Larimer F."/>
            <person name="Land M."/>
            <person name="Hauser L."/>
            <person name="Kyrpides N."/>
            <person name="Lykidis A."/>
            <person name="van de Werken H.J.G."/>
            <person name="Verhaart M.R.A."/>
            <person name="VanFossen A.L."/>
            <person name="Lewis D.L."/>
            <person name="Nichols J.D."/>
            <person name="Goorissen H.P."/>
            <person name="van Niel E.W.J."/>
            <person name="Stams F.J.M."/>
            <person name="Willquist K.U."/>
            <person name="Ward D.E."/>
            <person name="van der Oost J."/>
            <person name="Kelly R.M."/>
            <person name="Kengen S.M.W."/>
            <person name="Richardson P."/>
        </authorList>
    </citation>
    <scope>NUCLEOTIDE SEQUENCE [LARGE SCALE GENOMIC DNA]</scope>
    <source>
        <strain>ATCC 43494 / DSM 8903 / Tp8T 6331</strain>
    </source>
</reference>
<dbReference type="EMBL" id="CP000679">
    <property type="protein sequence ID" value="ABP66708.1"/>
    <property type="molecule type" value="Genomic_DNA"/>
</dbReference>
<dbReference type="RefSeq" id="WP_011916654.1">
    <property type="nucleotide sequence ID" value="NC_009437.1"/>
</dbReference>
<dbReference type="SMR" id="A4XIH3"/>
<dbReference type="STRING" id="351627.Csac_1095"/>
<dbReference type="KEGG" id="csc:Csac_1095"/>
<dbReference type="eggNOG" id="COG0691">
    <property type="taxonomic scope" value="Bacteria"/>
</dbReference>
<dbReference type="HOGENOM" id="CLU_108953_0_0_9"/>
<dbReference type="OrthoDB" id="9805462at2"/>
<dbReference type="Proteomes" id="UP000000256">
    <property type="component" value="Chromosome"/>
</dbReference>
<dbReference type="GO" id="GO:0005829">
    <property type="term" value="C:cytosol"/>
    <property type="evidence" value="ECO:0007669"/>
    <property type="project" value="TreeGrafter"/>
</dbReference>
<dbReference type="GO" id="GO:0003723">
    <property type="term" value="F:RNA binding"/>
    <property type="evidence" value="ECO:0007669"/>
    <property type="project" value="UniProtKB-UniRule"/>
</dbReference>
<dbReference type="GO" id="GO:0070929">
    <property type="term" value="P:trans-translation"/>
    <property type="evidence" value="ECO:0007669"/>
    <property type="project" value="UniProtKB-UniRule"/>
</dbReference>
<dbReference type="CDD" id="cd09294">
    <property type="entry name" value="SmpB"/>
    <property type="match status" value="1"/>
</dbReference>
<dbReference type="Gene3D" id="2.40.280.10">
    <property type="match status" value="1"/>
</dbReference>
<dbReference type="HAMAP" id="MF_00023">
    <property type="entry name" value="SmpB"/>
    <property type="match status" value="1"/>
</dbReference>
<dbReference type="InterPro" id="IPR023620">
    <property type="entry name" value="SmpB"/>
</dbReference>
<dbReference type="InterPro" id="IPR000037">
    <property type="entry name" value="SsrA-bd_prot"/>
</dbReference>
<dbReference type="InterPro" id="IPR020081">
    <property type="entry name" value="SsrA-bd_prot_CS"/>
</dbReference>
<dbReference type="NCBIfam" id="NF003843">
    <property type="entry name" value="PRK05422.1"/>
    <property type="match status" value="1"/>
</dbReference>
<dbReference type="NCBIfam" id="TIGR00086">
    <property type="entry name" value="smpB"/>
    <property type="match status" value="1"/>
</dbReference>
<dbReference type="PANTHER" id="PTHR30308:SF2">
    <property type="entry name" value="SSRA-BINDING PROTEIN"/>
    <property type="match status" value="1"/>
</dbReference>
<dbReference type="PANTHER" id="PTHR30308">
    <property type="entry name" value="TMRNA-BINDING COMPONENT OF TRANS-TRANSLATION TAGGING COMPLEX"/>
    <property type="match status" value="1"/>
</dbReference>
<dbReference type="Pfam" id="PF01668">
    <property type="entry name" value="SmpB"/>
    <property type="match status" value="1"/>
</dbReference>
<dbReference type="SUPFAM" id="SSF74982">
    <property type="entry name" value="Small protein B (SmpB)"/>
    <property type="match status" value="1"/>
</dbReference>
<dbReference type="PROSITE" id="PS01317">
    <property type="entry name" value="SSRP"/>
    <property type="match status" value="1"/>
</dbReference>
<accession>A4XIH3</accession>
<keyword id="KW-0963">Cytoplasm</keyword>
<keyword id="KW-0694">RNA-binding</keyword>
<proteinExistence type="inferred from homology"/>
<evidence type="ECO:0000255" key="1">
    <source>
        <dbReference type="HAMAP-Rule" id="MF_00023"/>
    </source>
</evidence>
<feature type="chain" id="PRO_0000331026" description="SsrA-binding protein">
    <location>
        <begin position="1"/>
        <end position="158"/>
    </location>
</feature>
<protein>
    <recommendedName>
        <fullName evidence="1">SsrA-binding protein</fullName>
    </recommendedName>
    <alternativeName>
        <fullName evidence="1">Small protein B</fullName>
    </alternativeName>
</protein>
<gene>
    <name evidence="1" type="primary">smpB</name>
    <name type="ordered locus">Csac_1095</name>
</gene>